<sequence length="1140" mass="126955">MSYNYVVTAQKPTAVNGCVTGHFTSAEDLNLLIAKNTRLEIYVVTAEGLRPVKEVGMYGKTAVMELFRPKGESKDLLFILTAKYNACILEYKQNGDNIDIITRAHGNVQDRIGRPSETGIIGIIDPECRMIGLRLYDGLFKVIPLDRENKELKAFNIRLEELQVIDVKFLYGCQAPTICFVYQDPQGRHVKTYEVSLREKEFNKGPWKQENVEAEASMVIAVPEPFGGAIIIGQESITYHNGDKYLAIAPPIIKQSTIVCHNRVDPNGSRYLLGDMEGRLFMLLLEKEEQMDGTVTLKDLRVELLGETSIAECLTYLDNGVVFVGSRLGDSQLVKLNVDSNEQGSYVVAMETFTNLGPIVDMCVVDLERQGQGQLVTCSGAFKEGSLRIIRNGIGIHEHASIDLPGIKGLWPLRSDSHREMDNMLVLSFVGQTRVLMLNGEEVEETELTGFVDDQQTFFCGNVAHQQLIQITSASVRLVSQEPKALVSEWKEPNGKNISVASCNSNQVVVAVGRALYYLEIRPQELRQINCTEMEHEVACLDITPLGDTNGMSPLCAIGLWTDISARILKLPSFELLHKEMLGGEIIPRSILMTTFESSHYLLCALGDGALFYFGLSLETGLLSDRKKVTLGTQPTVLRTFRSLSTTNVFACSDRPTVIYSSNHKLVFSNVNLKEVNYMCPLNSDGYPDSLALANNSTLTIGTIDEIQKLHIRTVPLYESPRKICYQEVSQCFGVLSSRIEVQDASGGTTALRPSASTQALSSSVSTSKLFSSSTAPHETSFGEEVEVHNLLIIDQHTFEVLHAHQFLQNEYALSLVSCKLGKDPNTYFIVGTAMVYPEEAEPKQGRIVVFHYSDGKLQSLAEKEVKGAVYSMVEFNGKLLASINSTVRLYEWTAEKELRTECNHYNNIMALYLKTKGDFILVGDLMRSVLLLAYKPMEGNFEEIARDFNPNWMSAVEILDDDNFLGAENAFNLFVCQKDSAATTDEERQHLQEVGLSHLGEFVNVFCHGSLVMQNLGETSTPTQGSVLFGTVNGMIGLVTSLSESWYNLLLDMQNRLNKVIKSVGKIEHSFWRSFHTERKTEPATGFIDGDLIESFLDISRPKMQEVVANLQIDDGSGMKREATVDDLIKIVEELTRIH</sequence>
<evidence type="ECO:0000250" key="1"/>
<evidence type="ECO:0000250" key="2">
    <source>
        <dbReference type="UniProtKB" id="Q16531"/>
    </source>
</evidence>
<evidence type="ECO:0000269" key="3">
    <source>
    </source>
</evidence>
<evidence type="ECO:0000269" key="4">
    <source>
    </source>
</evidence>
<evidence type="ECO:0000305" key="5"/>
<evidence type="ECO:0000305" key="6">
    <source>
    </source>
</evidence>
<gene>
    <name type="primary">DDB1</name>
    <name type="ORF">RCJMB04_6h2</name>
</gene>
<keyword id="KW-0090">Biological rhythms</keyword>
<keyword id="KW-0963">Cytoplasm</keyword>
<keyword id="KW-0227">DNA damage</keyword>
<keyword id="KW-0234">DNA repair</keyword>
<keyword id="KW-0238">DNA-binding</keyword>
<keyword id="KW-0539">Nucleus</keyword>
<keyword id="KW-1185">Reference proteome</keyword>
<keyword id="KW-0677">Repeat</keyword>
<keyword id="KW-0833">Ubl conjugation pathway</keyword>
<proteinExistence type="evidence at protein level"/>
<dbReference type="EMBL" id="AB074298">
    <property type="protein sequence ID" value="BAC56999.1"/>
    <property type="molecule type" value="mRNA"/>
</dbReference>
<dbReference type="EMBL" id="AJ719779">
    <property type="protein sequence ID" value="CAG31438.1"/>
    <property type="molecule type" value="mRNA"/>
</dbReference>
<dbReference type="RefSeq" id="NP_989547.1">
    <property type="nucleotide sequence ID" value="NM_204216.4"/>
</dbReference>
<dbReference type="SMR" id="Q805F9"/>
<dbReference type="FunCoup" id="Q805F9">
    <property type="interactions" value="3184"/>
</dbReference>
<dbReference type="STRING" id="9031.ENSGALP00000050113"/>
<dbReference type="PaxDb" id="9031-ENSGALP00000008338"/>
<dbReference type="GeneID" id="374050"/>
<dbReference type="KEGG" id="gga:374050"/>
<dbReference type="CTD" id="1642"/>
<dbReference type="VEuPathDB" id="HostDB:geneid_374050"/>
<dbReference type="eggNOG" id="KOG1897">
    <property type="taxonomic scope" value="Eukaryota"/>
</dbReference>
<dbReference type="InParanoid" id="Q805F9"/>
<dbReference type="OMA" id="HQDFLMR"/>
<dbReference type="OrthoDB" id="433457at2759"/>
<dbReference type="PhylomeDB" id="Q805F9"/>
<dbReference type="Reactome" id="R-GGA-353303">
    <property type="pathway name" value="Nucleotide Excision Repair"/>
</dbReference>
<dbReference type="UniPathway" id="UPA00143"/>
<dbReference type="PRO" id="PR:Q805F9"/>
<dbReference type="Proteomes" id="UP000000539">
    <property type="component" value="Unassembled WGS sequence"/>
</dbReference>
<dbReference type="GO" id="GO:0080008">
    <property type="term" value="C:Cul4-RING E3 ubiquitin ligase complex"/>
    <property type="evidence" value="ECO:0000250"/>
    <property type="project" value="UniProtKB"/>
</dbReference>
<dbReference type="GO" id="GO:0031464">
    <property type="term" value="C:Cul4A-RING E3 ubiquitin ligase complex"/>
    <property type="evidence" value="ECO:0000250"/>
    <property type="project" value="UniProtKB"/>
</dbReference>
<dbReference type="GO" id="GO:0031465">
    <property type="term" value="C:Cul4B-RING E3 ubiquitin ligase complex"/>
    <property type="evidence" value="ECO:0000250"/>
    <property type="project" value="UniProtKB"/>
</dbReference>
<dbReference type="GO" id="GO:0005737">
    <property type="term" value="C:cytoplasm"/>
    <property type="evidence" value="ECO:0000250"/>
    <property type="project" value="UniProtKB"/>
</dbReference>
<dbReference type="GO" id="GO:0005654">
    <property type="term" value="C:nucleoplasm"/>
    <property type="evidence" value="ECO:0000304"/>
    <property type="project" value="Reactome"/>
</dbReference>
<dbReference type="GO" id="GO:0005634">
    <property type="term" value="C:nucleus"/>
    <property type="evidence" value="ECO:0000250"/>
    <property type="project" value="UniProtKB"/>
</dbReference>
<dbReference type="GO" id="GO:0035861">
    <property type="term" value="C:site of double-strand break"/>
    <property type="evidence" value="ECO:0000318"/>
    <property type="project" value="GO_Central"/>
</dbReference>
<dbReference type="GO" id="GO:0003677">
    <property type="term" value="F:DNA binding"/>
    <property type="evidence" value="ECO:0007669"/>
    <property type="project" value="UniProtKB-KW"/>
</dbReference>
<dbReference type="GO" id="GO:0006281">
    <property type="term" value="P:DNA repair"/>
    <property type="evidence" value="ECO:0000318"/>
    <property type="project" value="GO_Central"/>
</dbReference>
<dbReference type="GO" id="GO:0043161">
    <property type="term" value="P:proteasome-mediated ubiquitin-dependent protein catabolic process"/>
    <property type="evidence" value="ECO:0000250"/>
    <property type="project" value="UniProtKB"/>
</dbReference>
<dbReference type="GO" id="GO:0016567">
    <property type="term" value="P:protein ubiquitination"/>
    <property type="evidence" value="ECO:0000250"/>
    <property type="project" value="UniProtKB"/>
</dbReference>
<dbReference type="GO" id="GO:0042752">
    <property type="term" value="P:regulation of circadian rhythm"/>
    <property type="evidence" value="ECO:0000250"/>
    <property type="project" value="UniProtKB"/>
</dbReference>
<dbReference type="GO" id="GO:0048511">
    <property type="term" value="P:rhythmic process"/>
    <property type="evidence" value="ECO:0007669"/>
    <property type="project" value="UniProtKB-KW"/>
</dbReference>
<dbReference type="FunFam" id="1.10.150.910:FF:000001">
    <property type="entry name" value="DNA damage-binding protein 1"/>
    <property type="match status" value="1"/>
</dbReference>
<dbReference type="FunFam" id="2.130.10.10:FF:000070">
    <property type="entry name" value="DNA damage-binding protein 1"/>
    <property type="match status" value="1"/>
</dbReference>
<dbReference type="FunFam" id="2.130.10.10:FF:002576">
    <property type="entry name" value="DNA damage-binding protein 1"/>
    <property type="match status" value="1"/>
</dbReference>
<dbReference type="Gene3D" id="1.10.150.910">
    <property type="match status" value="1"/>
</dbReference>
<dbReference type="Gene3D" id="2.130.10.10">
    <property type="entry name" value="YVTN repeat-like/Quinoprotein amine dehydrogenase"/>
    <property type="match status" value="3"/>
</dbReference>
<dbReference type="InterPro" id="IPR018846">
    <property type="entry name" value="Beta-prop_RSE1/DDB1/CPSF1_1st"/>
</dbReference>
<dbReference type="InterPro" id="IPR004871">
    <property type="entry name" value="Cleavage/polyA-sp_fac_asu_C"/>
</dbReference>
<dbReference type="InterPro" id="IPR011047">
    <property type="entry name" value="Quinoprotein_ADH-like_sf"/>
</dbReference>
<dbReference type="InterPro" id="IPR050358">
    <property type="entry name" value="RSE1/DDB1/CFT1/CPSF1"/>
</dbReference>
<dbReference type="InterPro" id="IPR015943">
    <property type="entry name" value="WD40/YVTN_repeat-like_dom_sf"/>
</dbReference>
<dbReference type="PANTHER" id="PTHR10644">
    <property type="entry name" value="DNA REPAIR/RNA PROCESSING CPSF FAMILY"/>
    <property type="match status" value="1"/>
</dbReference>
<dbReference type="Pfam" id="PF10433">
    <property type="entry name" value="Beta-prop_RSE1_1st"/>
    <property type="match status" value="1"/>
</dbReference>
<dbReference type="Pfam" id="PF23726">
    <property type="entry name" value="Beta-prop_RSE1_2nd"/>
    <property type="match status" value="1"/>
</dbReference>
<dbReference type="Pfam" id="PF03178">
    <property type="entry name" value="CPSF_A"/>
    <property type="match status" value="1"/>
</dbReference>
<dbReference type="SUPFAM" id="SSF50998">
    <property type="entry name" value="Quinoprotein alcohol dehydrogenase-like"/>
    <property type="match status" value="1"/>
</dbReference>
<comment type="function">
    <text evidence="2 6">Protein, which is both involved in DNA repair and protein ubiquitination, as part of the UV-DDB complex and DCX (DDB1-CUL4-X-box) complexes, respectively (By similarity). Core component of the UV-DDB complex (UV-damaged DNA-binding protein complex), a complex that recognizes UV-induced DNA damage and recruit proteins of the nucleotide excision repair pathway (the NER pathway) to initiate DNA repair (By similarity). The UV-DDB complex may recognize UV-induced DNA damage and recruit proteins of the nucleotide excision repair pathway (the NER pathway) to initiate DNA repair (By similarity). Also functions as a component of numerous distinct DCX (DDB1-CUL4-X-box) E3 ubiquitin-protein ligase complexes which mediate the ubiquitination and subsequent proteasomal degradation of target proteins (Probable). The functional specificity of the DCX E3 ubiquitin-protein ligase complex is determined by the variable substrate recognition component recruited by DDB1 (By similarity). May play a role in the regulation of the circadian clock (By similarity).</text>
</comment>
<comment type="pathway">
    <text evidence="6">Protein modification; protein ubiquitination.</text>
</comment>
<comment type="subunit">
    <text evidence="2 4">Component of the UV-DDB complex which includes DDB1 and DDB2 (By similarity). Component of numerous DCX (DDB1-CUL4-X-box) E3 ubiquitin-protein ligase complexes which consist of a core of DDB1, CUL4A or CUL4B and RBX1, and a substrate receptor, such as CRBN (PubMed:25043012). DDB1 may recruit specific substrate targeting subunits to the DCX complex. These substrate targeting subunits are generally known as DCAF (DDB1- and CUL4-associated factor) or CDW (CUL4-DDB1-associated WD40-repeat) proteins (By similarity).</text>
</comment>
<comment type="subcellular location">
    <subcellularLocation>
        <location evidence="3">Cytoplasm</location>
    </subcellularLocation>
    <subcellularLocation>
        <location evidence="3">Nucleus</location>
    </subcellularLocation>
</comment>
<comment type="domain">
    <text evidence="1">The core of the protein consists of three WD40 beta-propeller domains.</text>
</comment>
<comment type="similarity">
    <text evidence="5">Belongs to the DDB1 family.</text>
</comment>
<reference key="1">
    <citation type="journal article" date="2003" name="Genes Genet. Syst.">
        <title>cDNA cloning of the chicken DDB1 gene encoding the p127 subunit of damaged DNA-binding protein.</title>
        <authorList>
            <person name="Fu D."/>
            <person name="Wakasugi M."/>
            <person name="Ishigaki Y."/>
            <person name="Nikaido O."/>
            <person name="Matsunaga T."/>
        </authorList>
    </citation>
    <scope>NUCLEOTIDE SEQUENCE [MRNA]</scope>
    <scope>SUBCELLULAR LOCATION</scope>
</reference>
<reference key="2">
    <citation type="journal article" date="2005" name="Genome Biol.">
        <title>Full-length cDNAs from chicken bursal lymphocytes to facilitate gene function analysis.</title>
        <authorList>
            <person name="Caldwell R.B."/>
            <person name="Kierzek A.M."/>
            <person name="Arakawa H."/>
            <person name="Bezzubov Y."/>
            <person name="Zaim J."/>
            <person name="Fiedler P."/>
            <person name="Kutter S."/>
            <person name="Blagodatski A."/>
            <person name="Kostovska D."/>
            <person name="Koter M."/>
            <person name="Plachy J."/>
            <person name="Carninci P."/>
            <person name="Hayashizaki Y."/>
            <person name="Buerstedde J.-M."/>
        </authorList>
    </citation>
    <scope>NUCLEOTIDE SEQUENCE [LARGE SCALE MRNA]</scope>
    <source>
        <strain>CB</strain>
        <tissue>Bursa of Fabricius</tissue>
    </source>
</reference>
<reference key="3">
    <citation type="journal article" date="2014" name="Nature">
        <title>Structure of the DDB1-CRBN E3 ubiquitin ligase in complex with thalidomide.</title>
        <authorList>
            <person name="Fischer E.S."/>
            <person name="Bohm K."/>
            <person name="Lydeard J.R."/>
            <person name="Yang H."/>
            <person name="Stadler M.B."/>
            <person name="Cavadini S."/>
            <person name="Nagel J."/>
            <person name="Serluca F."/>
            <person name="Acker V."/>
            <person name="Lingaraju G.M."/>
            <person name="Tichkule R.B."/>
            <person name="Schebesta M."/>
            <person name="Forrester W.C."/>
            <person name="Schirle M."/>
            <person name="Hassiepen U."/>
            <person name="Ottl J."/>
            <person name="Hild M."/>
            <person name="Beckwith R.E."/>
            <person name="Harper J.W."/>
            <person name="Jenkins J.L."/>
            <person name="Thoma N.H."/>
        </authorList>
    </citation>
    <scope>INTERACTION WITH CRBN</scope>
</reference>
<name>DDB1_CHICK</name>
<organism>
    <name type="scientific">Gallus gallus</name>
    <name type="common">Chicken</name>
    <dbReference type="NCBI Taxonomy" id="9031"/>
    <lineage>
        <taxon>Eukaryota</taxon>
        <taxon>Metazoa</taxon>
        <taxon>Chordata</taxon>
        <taxon>Craniata</taxon>
        <taxon>Vertebrata</taxon>
        <taxon>Euteleostomi</taxon>
        <taxon>Archelosauria</taxon>
        <taxon>Archosauria</taxon>
        <taxon>Dinosauria</taxon>
        <taxon>Saurischia</taxon>
        <taxon>Theropoda</taxon>
        <taxon>Coelurosauria</taxon>
        <taxon>Aves</taxon>
        <taxon>Neognathae</taxon>
        <taxon>Galloanserae</taxon>
        <taxon>Galliformes</taxon>
        <taxon>Phasianidae</taxon>
        <taxon>Phasianinae</taxon>
        <taxon>Gallus</taxon>
    </lineage>
</organism>
<feature type="chain" id="PRO_0000281039" description="DNA damage-binding protein 1">
    <location>
        <begin position="1"/>
        <end position="1140"/>
    </location>
</feature>
<feature type="region of interest" description="WD repeat beta-propeller A" evidence="1">
    <location>
        <begin position="13"/>
        <end position="356"/>
    </location>
</feature>
<feature type="region of interest" description="WD repeat beta-propeller B; Interaction with CUL4A" evidence="1">
    <location>
        <begin position="391"/>
        <end position="708"/>
    </location>
</feature>
<feature type="region of interest" description="WD repeat beta-propeller C" evidence="1">
    <location>
        <begin position="709"/>
        <end position="1043"/>
    </location>
</feature>
<accession>Q805F9</accession>
<protein>
    <recommendedName>
        <fullName>DNA damage-binding protein 1</fullName>
    </recommendedName>
    <alternativeName>
        <fullName>DDB p127 subunit</fullName>
    </alternativeName>
    <alternativeName>
        <fullName>Damage-specific DNA-binding protein 1</fullName>
    </alternativeName>
    <alternativeName>
        <fullName>UV-damaged DNA-binding factor</fullName>
    </alternativeName>
</protein>